<comment type="function">
    <text evidence="2">Part of the phosphoribosylformylglycinamidine synthase complex involved in the purines biosynthetic pathway. Catalyzes the ATP-dependent conversion of formylglycinamide ribonucleotide (FGAR) and glutamine to yield formylglycinamidine ribonucleotide (FGAM) and glutamate. The FGAM synthase complex is composed of three subunits. PurQ produces an ammonia molecule by converting glutamine to glutamate. PurL transfers the ammonia molecule to FGAR to form FGAM in an ATP-dependent manner. PurS interacts with PurQ and PurL and is thought to assist in the transfer of the ammonia molecule from PurQ to PurL.</text>
</comment>
<comment type="catalytic activity">
    <reaction evidence="2">
        <text>N(2)-formyl-N(1)-(5-phospho-beta-D-ribosyl)glycinamide + L-glutamine + ATP + H2O = 2-formamido-N(1)-(5-O-phospho-beta-D-ribosyl)acetamidine + L-glutamate + ADP + phosphate + H(+)</text>
        <dbReference type="Rhea" id="RHEA:17129"/>
        <dbReference type="ChEBI" id="CHEBI:15377"/>
        <dbReference type="ChEBI" id="CHEBI:15378"/>
        <dbReference type="ChEBI" id="CHEBI:29985"/>
        <dbReference type="ChEBI" id="CHEBI:30616"/>
        <dbReference type="ChEBI" id="CHEBI:43474"/>
        <dbReference type="ChEBI" id="CHEBI:58359"/>
        <dbReference type="ChEBI" id="CHEBI:147286"/>
        <dbReference type="ChEBI" id="CHEBI:147287"/>
        <dbReference type="ChEBI" id="CHEBI:456216"/>
        <dbReference type="EC" id="6.3.5.3"/>
    </reaction>
</comment>
<comment type="pathway">
    <text evidence="2">Purine metabolism; IMP biosynthesis via de novo pathway; 5-amino-1-(5-phospho-D-ribosyl)imidazole from N(2)-formyl-N(1)-(5-phospho-D-ribosyl)glycinamide: step 1/2.</text>
</comment>
<comment type="subunit">
    <text evidence="2">Monomer. Part of the FGAM synthase complex composed of 1 PurL, 1 PurQ and 2 PurS subunits.</text>
</comment>
<comment type="subcellular location">
    <subcellularLocation>
        <location evidence="2">Cytoplasm</location>
    </subcellularLocation>
</comment>
<comment type="similarity">
    <text evidence="2">Belongs to the FGAMS family.</text>
</comment>
<comment type="sequence caution" evidence="1">
    <conflict type="erroneous initiation">
        <sequence resource="EMBL-CDS" id="ABQ72542"/>
    </conflict>
    <text>Truncated N-terminus.</text>
</comment>
<accession>A5U0J2</accession>
<name>PURL_MYCTA</name>
<organism>
    <name type="scientific">Mycobacterium tuberculosis (strain ATCC 25177 / H37Ra)</name>
    <dbReference type="NCBI Taxonomy" id="419947"/>
    <lineage>
        <taxon>Bacteria</taxon>
        <taxon>Bacillati</taxon>
        <taxon>Actinomycetota</taxon>
        <taxon>Actinomycetes</taxon>
        <taxon>Mycobacteriales</taxon>
        <taxon>Mycobacteriaceae</taxon>
        <taxon>Mycobacterium</taxon>
        <taxon>Mycobacterium tuberculosis complex</taxon>
    </lineage>
</organism>
<feature type="chain" id="PRO_1000050325" description="Phosphoribosylformylglycinamidine synthase subunit PurL">
    <location>
        <begin position="1"/>
        <end position="766"/>
    </location>
</feature>
<feature type="active site" evidence="2">
    <location>
        <position position="66"/>
    </location>
</feature>
<feature type="active site" description="Proton acceptor" evidence="2">
    <location>
        <position position="117"/>
    </location>
</feature>
<feature type="binding site" evidence="2">
    <location>
        <position position="69"/>
    </location>
    <ligand>
        <name>ATP</name>
        <dbReference type="ChEBI" id="CHEBI:30616"/>
    </ligand>
</feature>
<feature type="binding site" evidence="2">
    <location>
        <position position="113"/>
    </location>
    <ligand>
        <name>ATP</name>
        <dbReference type="ChEBI" id="CHEBI:30616"/>
    </ligand>
</feature>
<feature type="binding site" evidence="2">
    <location>
        <position position="115"/>
    </location>
    <ligand>
        <name>Mg(2+)</name>
        <dbReference type="ChEBI" id="CHEBI:18420"/>
        <label>1</label>
    </ligand>
</feature>
<feature type="binding site" evidence="2">
    <location>
        <begin position="116"/>
        <end position="119"/>
    </location>
    <ligand>
        <name>substrate</name>
    </ligand>
</feature>
<feature type="binding site" evidence="2">
    <location>
        <position position="138"/>
    </location>
    <ligand>
        <name>substrate</name>
    </ligand>
</feature>
<feature type="binding site" evidence="2">
    <location>
        <position position="139"/>
    </location>
    <ligand>
        <name>Mg(2+)</name>
        <dbReference type="ChEBI" id="CHEBI:18420"/>
        <label>2</label>
    </ligand>
</feature>
<feature type="binding site" evidence="2">
    <location>
        <position position="264"/>
    </location>
    <ligand>
        <name>substrate</name>
    </ligand>
</feature>
<feature type="binding site" evidence="2">
    <location>
        <position position="292"/>
    </location>
    <ligand>
        <name>Mg(2+)</name>
        <dbReference type="ChEBI" id="CHEBI:18420"/>
        <label>2</label>
    </ligand>
</feature>
<feature type="binding site" evidence="2">
    <location>
        <begin position="336"/>
        <end position="338"/>
    </location>
    <ligand>
        <name>substrate</name>
    </ligand>
</feature>
<feature type="binding site" evidence="2">
    <location>
        <position position="524"/>
    </location>
    <ligand>
        <name>ATP</name>
        <dbReference type="ChEBI" id="CHEBI:30616"/>
    </ligand>
</feature>
<feature type="binding site" evidence="2">
    <location>
        <position position="561"/>
    </location>
    <ligand>
        <name>ATP</name>
        <dbReference type="ChEBI" id="CHEBI:30616"/>
    </ligand>
</feature>
<feature type="binding site" evidence="2">
    <location>
        <position position="562"/>
    </location>
    <ligand>
        <name>Mg(2+)</name>
        <dbReference type="ChEBI" id="CHEBI:18420"/>
        <label>1</label>
    </ligand>
</feature>
<feature type="binding site" evidence="2">
    <location>
        <position position="564"/>
    </location>
    <ligand>
        <name>substrate</name>
    </ligand>
</feature>
<dbReference type="EC" id="6.3.5.3" evidence="2"/>
<dbReference type="EMBL" id="CP000611">
    <property type="protein sequence ID" value="ABQ72542.1"/>
    <property type="status" value="ALT_INIT"/>
    <property type="molecule type" value="Genomic_DNA"/>
</dbReference>
<dbReference type="SMR" id="A5U0J2"/>
<dbReference type="KEGG" id="mra:MRA_0813"/>
<dbReference type="eggNOG" id="COG0046">
    <property type="taxonomic scope" value="Bacteria"/>
</dbReference>
<dbReference type="HOGENOM" id="CLU_003100_0_1_11"/>
<dbReference type="UniPathway" id="UPA00074">
    <property type="reaction ID" value="UER00128"/>
</dbReference>
<dbReference type="Proteomes" id="UP000001988">
    <property type="component" value="Chromosome"/>
</dbReference>
<dbReference type="GO" id="GO:0005737">
    <property type="term" value="C:cytoplasm"/>
    <property type="evidence" value="ECO:0007669"/>
    <property type="project" value="UniProtKB-SubCell"/>
</dbReference>
<dbReference type="GO" id="GO:0005524">
    <property type="term" value="F:ATP binding"/>
    <property type="evidence" value="ECO:0007669"/>
    <property type="project" value="UniProtKB-UniRule"/>
</dbReference>
<dbReference type="GO" id="GO:0000287">
    <property type="term" value="F:magnesium ion binding"/>
    <property type="evidence" value="ECO:0007669"/>
    <property type="project" value="UniProtKB-UniRule"/>
</dbReference>
<dbReference type="GO" id="GO:0004642">
    <property type="term" value="F:phosphoribosylformylglycinamidine synthase activity"/>
    <property type="evidence" value="ECO:0007669"/>
    <property type="project" value="UniProtKB-UniRule"/>
</dbReference>
<dbReference type="GO" id="GO:0006189">
    <property type="term" value="P:'de novo' IMP biosynthetic process"/>
    <property type="evidence" value="ECO:0007669"/>
    <property type="project" value="UniProtKB-UniRule"/>
</dbReference>
<dbReference type="CDD" id="cd02203">
    <property type="entry name" value="PurL_repeat1"/>
    <property type="match status" value="1"/>
</dbReference>
<dbReference type="CDD" id="cd02204">
    <property type="entry name" value="PurL_repeat2"/>
    <property type="match status" value="1"/>
</dbReference>
<dbReference type="FunFam" id="3.30.1330.10:FF:000004">
    <property type="entry name" value="Phosphoribosylformylglycinamidine synthase subunit PurL"/>
    <property type="match status" value="1"/>
</dbReference>
<dbReference type="FunFam" id="3.30.1330.10:FF:000021">
    <property type="entry name" value="Phosphoribosylformylglycinamidine synthase subunit PurL"/>
    <property type="match status" value="1"/>
</dbReference>
<dbReference type="FunFam" id="3.90.650.10:FF:000009">
    <property type="entry name" value="Phosphoribosylformylglycinamidine synthase subunit PurL"/>
    <property type="match status" value="1"/>
</dbReference>
<dbReference type="FunFam" id="3.90.650.10:FF:000026">
    <property type="entry name" value="Phosphoribosylformylglycinamidine synthase subunit PurL"/>
    <property type="match status" value="1"/>
</dbReference>
<dbReference type="Gene3D" id="3.90.650.10">
    <property type="entry name" value="PurM-like C-terminal domain"/>
    <property type="match status" value="2"/>
</dbReference>
<dbReference type="Gene3D" id="3.30.1330.10">
    <property type="entry name" value="PurM-like, N-terminal domain"/>
    <property type="match status" value="2"/>
</dbReference>
<dbReference type="HAMAP" id="MF_00420">
    <property type="entry name" value="PurL_2"/>
    <property type="match status" value="1"/>
</dbReference>
<dbReference type="InterPro" id="IPR010074">
    <property type="entry name" value="PRibForGlyAmidine_synth_PurL"/>
</dbReference>
<dbReference type="InterPro" id="IPR041609">
    <property type="entry name" value="PurL_linker"/>
</dbReference>
<dbReference type="InterPro" id="IPR010918">
    <property type="entry name" value="PurM-like_C_dom"/>
</dbReference>
<dbReference type="InterPro" id="IPR036676">
    <property type="entry name" value="PurM-like_C_sf"/>
</dbReference>
<dbReference type="InterPro" id="IPR016188">
    <property type="entry name" value="PurM-like_N"/>
</dbReference>
<dbReference type="InterPro" id="IPR036921">
    <property type="entry name" value="PurM-like_N_sf"/>
</dbReference>
<dbReference type="NCBIfam" id="TIGR01736">
    <property type="entry name" value="FGAM_synth_II"/>
    <property type="match status" value="1"/>
</dbReference>
<dbReference type="NCBIfam" id="NF002290">
    <property type="entry name" value="PRK01213.1"/>
    <property type="match status" value="1"/>
</dbReference>
<dbReference type="PANTHER" id="PTHR43555">
    <property type="entry name" value="PHOSPHORIBOSYLFORMYLGLYCINAMIDINE SYNTHASE SUBUNIT PURL"/>
    <property type="match status" value="1"/>
</dbReference>
<dbReference type="PANTHER" id="PTHR43555:SF1">
    <property type="entry name" value="PHOSPHORIBOSYLFORMYLGLYCINAMIDINE SYNTHASE SUBUNIT PURL"/>
    <property type="match status" value="1"/>
</dbReference>
<dbReference type="Pfam" id="PF00586">
    <property type="entry name" value="AIRS"/>
    <property type="match status" value="2"/>
</dbReference>
<dbReference type="Pfam" id="PF02769">
    <property type="entry name" value="AIRS_C"/>
    <property type="match status" value="2"/>
</dbReference>
<dbReference type="Pfam" id="PF18072">
    <property type="entry name" value="FGAR-AT_linker"/>
    <property type="match status" value="1"/>
</dbReference>
<dbReference type="PIRSF" id="PIRSF001587">
    <property type="entry name" value="FGAM_synthase_II"/>
    <property type="match status" value="1"/>
</dbReference>
<dbReference type="SUPFAM" id="SSF56042">
    <property type="entry name" value="PurM C-terminal domain-like"/>
    <property type="match status" value="2"/>
</dbReference>
<dbReference type="SUPFAM" id="SSF55326">
    <property type="entry name" value="PurM N-terminal domain-like"/>
    <property type="match status" value="2"/>
</dbReference>
<protein>
    <recommendedName>
        <fullName evidence="2">Phosphoribosylformylglycinamidine synthase subunit PurL</fullName>
        <shortName evidence="2">FGAM synthase</shortName>
        <ecNumber evidence="2">6.3.5.3</ecNumber>
    </recommendedName>
    <alternativeName>
        <fullName evidence="2">Formylglycinamide ribonucleotide amidotransferase subunit II</fullName>
        <shortName evidence="2">FGAR amidotransferase II</shortName>
        <shortName evidence="2">FGAR-AT II</shortName>
    </alternativeName>
    <alternativeName>
        <fullName evidence="2">Glutamine amidotransferase PurL</fullName>
    </alternativeName>
    <alternativeName>
        <fullName evidence="2">Phosphoribosylformylglycinamidine synthase subunit II</fullName>
    </alternativeName>
</protein>
<reference key="1">
    <citation type="journal article" date="2008" name="PLoS ONE">
        <title>Genetic basis of virulence attenuation revealed by comparative genomic analysis of Mycobacterium tuberculosis strain H37Ra versus H37Rv.</title>
        <authorList>
            <person name="Zheng H."/>
            <person name="Lu L."/>
            <person name="Wang B."/>
            <person name="Pu S."/>
            <person name="Zhang X."/>
            <person name="Zhu G."/>
            <person name="Shi W."/>
            <person name="Zhang L."/>
            <person name="Wang H."/>
            <person name="Wang S."/>
            <person name="Zhao G."/>
            <person name="Zhang Y."/>
        </authorList>
    </citation>
    <scope>NUCLEOTIDE SEQUENCE [LARGE SCALE GENOMIC DNA]</scope>
    <source>
        <strain>ATCC 25177 / H37Ra</strain>
    </source>
</reference>
<keyword id="KW-0067">ATP-binding</keyword>
<keyword id="KW-0963">Cytoplasm</keyword>
<keyword id="KW-0436">Ligase</keyword>
<keyword id="KW-0460">Magnesium</keyword>
<keyword id="KW-0479">Metal-binding</keyword>
<keyword id="KW-0547">Nucleotide-binding</keyword>
<keyword id="KW-0658">Purine biosynthesis</keyword>
<keyword id="KW-1185">Reference proteome</keyword>
<sequence>MSPLARTPRKTSVLDTVEHAATTPDQPQPYGELGLKDDEYRRIRQILGRRPTDTELAMYSVMWSEHCSYKSSKVHLRYFGETTSDEMRAAMLAGIGENAGVVDIGDGWAVTFKVESHNHPSYVEPYQGAATGVGGIVRDIMAMGARPVAVMDQLRFGAADAPDTRRVLDGVVRGIGGYGNSLGLPNIGGETVFDPCYAGNPLVNALCVGVLRQEDLHLAFASGAGNKIILFGARTGLDGIGGVSVLASDTFDAEGSRKKLPSVQVGDPFMEKVLIECCLELYAGGLVIGIQDLGGAGLSCATSELASAGDGGMTIQLDSVPLRAKEMTPAEVLCSESQERMCAVVSPKNVDAFLAVCRKWEVLATVIGEVTDGDRLQITWHGETVVDVPPRTVAHEGPVYQRPVARPDTQDALNADRSAKLSRPVTGDELRATLLALLGSPHLCSRAFITEQYDRYVRGNTVLAEHADGGMLRIDESTGRGIAVSTDASGRYTLLDPYAGAQLALAEAYRNVAVTGATPVAVTNCLNFGSPEDPGVMWQFTQAVRGLADGCADLGIPVTGGNVSFYNQTGSAAILPTPVVGVLGVIDDVRRRIPTGLGAEPGETLMLLGDTRDEFDGSVWAQVTADHLGGLPPVVDLAREKLLAAVLSSASRDGLVSAAHDLSEGGLAQAIVESALAGETGCRIVLPEGADPFVLLFSESAGRVLVAVPRTEESRFRGMCEARGLPAVRIGVVDQGSDAVEVQGLFAVSLAELRATSEAVLPRYFG</sequence>
<evidence type="ECO:0000250" key="1">
    <source>
        <dbReference type="UniProtKB" id="P9WHL7"/>
    </source>
</evidence>
<evidence type="ECO:0000255" key="2">
    <source>
        <dbReference type="HAMAP-Rule" id="MF_00420"/>
    </source>
</evidence>
<proteinExistence type="inferred from homology"/>
<gene>
    <name evidence="2" type="primary">purL</name>
    <name type="ordered locus">MRA_0813</name>
</gene>